<accession>P59230</accession>
<accession>P53029</accession>
<accession>Q9C5M4</accession>
<accession>Q9SLF8</accession>
<sequence length="216" mass="24425">MSKLQSEAVREAITTIKGKSEEKKRNFVETVELQIGLKNYDPQKDKRFSGSVKLPHIPRPKMKICMLGDAQHVEEAEKMGLSNMDVEALKKLNKNKKLVKKLAKSYHAFLASESVIKQIPRLLGPGLNKAGKFPTLVSHQESLEAKVNETKATVKFQLKKVLCMGVAVGNLSMEEKQLFQNVQMSVNFLVSLLKKNWQNVRCLYLKSTMGPPQRIF</sequence>
<gene>
    <name type="primary">RPL10AB</name>
    <name type="ordered locus">At2g27530</name>
    <name type="ORF">F10A12.22</name>
    <name type="ORF">F15K20.37</name>
</gene>
<comment type="subunit">
    <text evidence="1">Interacts with the GTPase NUG2.</text>
</comment>
<comment type="similarity">
    <text evidence="3">Belongs to the universal ribosomal protein uL1 family.</text>
</comment>
<feature type="chain" id="PRO_0000125833" description="Large ribosomal subunit protein uL1y">
    <location>
        <begin position="1"/>
        <end position="216"/>
    </location>
</feature>
<protein>
    <recommendedName>
        <fullName evidence="2">Large ribosomal subunit protein uL1y</fullName>
    </recommendedName>
    <alternativeName>
        <fullName>60S ribosomal protein L10a-2</fullName>
    </alternativeName>
</protein>
<keyword id="KW-1185">Reference proteome</keyword>
<keyword id="KW-0687">Ribonucleoprotein</keyword>
<keyword id="KW-0689">Ribosomal protein</keyword>
<organism>
    <name type="scientific">Arabidopsis thaliana</name>
    <name type="common">Mouse-ear cress</name>
    <dbReference type="NCBI Taxonomy" id="3702"/>
    <lineage>
        <taxon>Eukaryota</taxon>
        <taxon>Viridiplantae</taxon>
        <taxon>Streptophyta</taxon>
        <taxon>Embryophyta</taxon>
        <taxon>Tracheophyta</taxon>
        <taxon>Spermatophyta</taxon>
        <taxon>Magnoliopsida</taxon>
        <taxon>eudicotyledons</taxon>
        <taxon>Gunneridae</taxon>
        <taxon>Pentapetalae</taxon>
        <taxon>rosids</taxon>
        <taxon>malvids</taxon>
        <taxon>Brassicales</taxon>
        <taxon>Brassicaceae</taxon>
        <taxon>Camelineae</taxon>
        <taxon>Arabidopsis</taxon>
    </lineage>
</organism>
<reference key="1">
    <citation type="journal article" date="1999" name="Nature">
        <title>Sequence and analysis of chromosome 2 of the plant Arabidopsis thaliana.</title>
        <authorList>
            <person name="Lin X."/>
            <person name="Kaul S."/>
            <person name="Rounsley S.D."/>
            <person name="Shea T.P."/>
            <person name="Benito M.-I."/>
            <person name="Town C.D."/>
            <person name="Fujii C.Y."/>
            <person name="Mason T.M."/>
            <person name="Bowman C.L."/>
            <person name="Barnstead M.E."/>
            <person name="Feldblyum T.V."/>
            <person name="Buell C.R."/>
            <person name="Ketchum K.A."/>
            <person name="Lee J.J."/>
            <person name="Ronning C.M."/>
            <person name="Koo H.L."/>
            <person name="Moffat K.S."/>
            <person name="Cronin L.A."/>
            <person name="Shen M."/>
            <person name="Pai G."/>
            <person name="Van Aken S."/>
            <person name="Umayam L."/>
            <person name="Tallon L.J."/>
            <person name="Gill J.E."/>
            <person name="Adams M.D."/>
            <person name="Carrera A.J."/>
            <person name="Creasy T.H."/>
            <person name="Goodman H.M."/>
            <person name="Somerville C.R."/>
            <person name="Copenhaver G.P."/>
            <person name="Preuss D."/>
            <person name="Nierman W.C."/>
            <person name="White O."/>
            <person name="Eisen J.A."/>
            <person name="Salzberg S.L."/>
            <person name="Fraser C.M."/>
            <person name="Venter J.C."/>
        </authorList>
    </citation>
    <scope>NUCLEOTIDE SEQUENCE [LARGE SCALE GENOMIC DNA]</scope>
    <source>
        <strain>cv. Columbia</strain>
    </source>
</reference>
<reference key="2">
    <citation type="journal article" date="2017" name="Plant J.">
        <title>Araport11: a complete reannotation of the Arabidopsis thaliana reference genome.</title>
        <authorList>
            <person name="Cheng C.Y."/>
            <person name="Krishnakumar V."/>
            <person name="Chan A.P."/>
            <person name="Thibaud-Nissen F."/>
            <person name="Schobel S."/>
            <person name="Town C.D."/>
        </authorList>
    </citation>
    <scope>GENOME REANNOTATION</scope>
    <source>
        <strain>cv. Columbia</strain>
    </source>
</reference>
<reference key="3">
    <citation type="journal article" date="2003" name="Science">
        <title>Empirical analysis of transcriptional activity in the Arabidopsis genome.</title>
        <authorList>
            <person name="Yamada K."/>
            <person name="Lim J."/>
            <person name="Dale J.M."/>
            <person name="Chen H."/>
            <person name="Shinn P."/>
            <person name="Palm C.J."/>
            <person name="Southwick A.M."/>
            <person name="Wu H.C."/>
            <person name="Kim C.J."/>
            <person name="Nguyen M."/>
            <person name="Pham P.K."/>
            <person name="Cheuk R.F."/>
            <person name="Karlin-Newmann G."/>
            <person name="Liu S.X."/>
            <person name="Lam B."/>
            <person name="Sakano H."/>
            <person name="Wu T."/>
            <person name="Yu G."/>
            <person name="Miranda M."/>
            <person name="Quach H.L."/>
            <person name="Tripp M."/>
            <person name="Chang C.H."/>
            <person name="Lee J.M."/>
            <person name="Toriumi M.J."/>
            <person name="Chan M.M."/>
            <person name="Tang C.C."/>
            <person name="Onodera C.S."/>
            <person name="Deng J.M."/>
            <person name="Akiyama K."/>
            <person name="Ansari Y."/>
            <person name="Arakawa T."/>
            <person name="Banh J."/>
            <person name="Banno F."/>
            <person name="Bowser L."/>
            <person name="Brooks S.Y."/>
            <person name="Carninci P."/>
            <person name="Chao Q."/>
            <person name="Choy N."/>
            <person name="Enju A."/>
            <person name="Goldsmith A.D."/>
            <person name="Gurjal M."/>
            <person name="Hansen N.F."/>
            <person name="Hayashizaki Y."/>
            <person name="Johnson-Hopson C."/>
            <person name="Hsuan V.W."/>
            <person name="Iida K."/>
            <person name="Karnes M."/>
            <person name="Khan S."/>
            <person name="Koesema E."/>
            <person name="Ishida J."/>
            <person name="Jiang P.X."/>
            <person name="Jones T."/>
            <person name="Kawai J."/>
            <person name="Kamiya A."/>
            <person name="Meyers C."/>
            <person name="Nakajima M."/>
            <person name="Narusaka M."/>
            <person name="Seki M."/>
            <person name="Sakurai T."/>
            <person name="Satou M."/>
            <person name="Tamse R."/>
            <person name="Vaysberg M."/>
            <person name="Wallender E.K."/>
            <person name="Wong C."/>
            <person name="Yamamura Y."/>
            <person name="Yuan S."/>
            <person name="Shinozaki K."/>
            <person name="Davis R.W."/>
            <person name="Theologis A."/>
            <person name="Ecker J.R."/>
        </authorList>
    </citation>
    <scope>NUCLEOTIDE SEQUENCE [LARGE SCALE MRNA]</scope>
    <source>
        <strain>cv. Columbia</strain>
    </source>
</reference>
<reference key="4">
    <citation type="journal article" date="1996" name="Plant J.">
        <title>Further progress towards a catalogue of all Arabidopsis genes: analysis of a set of 5000 non-redundant ESTs.</title>
        <authorList>
            <person name="Cooke R."/>
            <person name="Raynal M."/>
            <person name="Laudie M."/>
            <person name="Grellet F."/>
            <person name="Delseny M."/>
            <person name="Morris P.-C."/>
            <person name="Guerrier D."/>
            <person name="Giraudat J."/>
            <person name="Quigley F."/>
            <person name="Clabault G."/>
            <person name="Li Y.-F."/>
            <person name="Mache R."/>
            <person name="Krivitzky M."/>
            <person name="Gy I.J.-J."/>
            <person name="Kreis M."/>
            <person name="Lecharny A."/>
            <person name="Parmentier Y."/>
            <person name="Marbach J."/>
            <person name="Fleck J."/>
            <person name="Clement B."/>
            <person name="Philipps G."/>
            <person name="Herve C."/>
            <person name="Bardet C."/>
            <person name="Tremousaygue D."/>
            <person name="Lescure B."/>
            <person name="Lacomme C."/>
            <person name="Roby D."/>
            <person name="Jourjon M.-F."/>
            <person name="Chabrier P."/>
            <person name="Charpenteau J.-L."/>
            <person name="Desprez T."/>
            <person name="Amselem J."/>
            <person name="Chiapello H."/>
            <person name="Hoefte H."/>
        </authorList>
    </citation>
    <scope>NUCLEOTIDE SEQUENCE [LARGE SCALE MRNA] OF 1-126</scope>
    <source>
        <strain>cv. Columbia</strain>
        <tissue>Dry seed</tissue>
    </source>
</reference>
<reference key="5">
    <citation type="journal article" date="2001" name="Plant Physiol.">
        <title>The organization of cytoplasmic ribosomal protein genes in the Arabidopsis genome.</title>
        <authorList>
            <person name="Barakat A."/>
            <person name="Szick-Miranda K."/>
            <person name="Chang I.-F."/>
            <person name="Guyot R."/>
            <person name="Blanc G."/>
            <person name="Cooke R."/>
            <person name="Delseny M."/>
            <person name="Bailey-Serres J."/>
        </authorList>
    </citation>
    <scope>GENE FAMILY ORGANIZATION</scope>
    <scope>NOMENCLATURE</scope>
</reference>
<reference key="6">
    <citation type="journal article" date="2011" name="J. Biol. Chem.">
        <title>Nuclear/nucleolar GTPase 2 proteins as a subfamily of YlqF/YawG GTPases function in pre-60S ribosomal subunit maturation of mono- and dicotyledonous plants.</title>
        <authorList>
            <person name="Im C.H."/>
            <person name="Hwang S.M."/>
            <person name="Son Y.S."/>
            <person name="Heo J.B."/>
            <person name="Bang W.Y."/>
            <person name="Suwastika I.N."/>
            <person name="Shiina T."/>
            <person name="Bahk J.D."/>
        </authorList>
    </citation>
    <scope>INTERACTION WITH NUG2</scope>
</reference>
<reference key="7">
    <citation type="journal article" date="2023" name="Plant Cell">
        <title>An updated nomenclature for plant ribosomal protein genes.</title>
        <authorList>
            <person name="Scarpin M.R."/>
            <person name="Busche M."/>
            <person name="Martinez R.E."/>
            <person name="Harper L.C."/>
            <person name="Reiser L."/>
            <person name="Szakonyi D."/>
            <person name="Merchante C."/>
            <person name="Lan T."/>
            <person name="Xiong W."/>
            <person name="Mo B."/>
            <person name="Tang G."/>
            <person name="Chen X."/>
            <person name="Bailey-Serres J."/>
            <person name="Browning K.S."/>
            <person name="Brunkard J.O."/>
        </authorList>
    </citation>
    <scope>NOMENCLATURE</scope>
</reference>
<name>R10A2_ARATH</name>
<proteinExistence type="evidence at protein level"/>
<evidence type="ECO:0000269" key="1">
    <source>
    </source>
</evidence>
<evidence type="ECO:0000303" key="2">
    <source>
    </source>
</evidence>
<evidence type="ECO:0000305" key="3"/>
<dbReference type="EMBL" id="AC005824">
    <property type="protein sequence ID" value="AAC73045.2"/>
    <property type="molecule type" value="Genomic_DNA"/>
</dbReference>
<dbReference type="EMBL" id="AC006232">
    <property type="protein sequence ID" value="AAM15190.1"/>
    <property type="molecule type" value="Genomic_DNA"/>
</dbReference>
<dbReference type="EMBL" id="CP002685">
    <property type="protein sequence ID" value="AEC08010.1"/>
    <property type="molecule type" value="Genomic_DNA"/>
</dbReference>
<dbReference type="EMBL" id="CP002685">
    <property type="protein sequence ID" value="AEC08011.1"/>
    <property type="molecule type" value="Genomic_DNA"/>
</dbReference>
<dbReference type="EMBL" id="AF360146">
    <property type="protein sequence ID" value="AAK25856.1"/>
    <property type="molecule type" value="mRNA"/>
</dbReference>
<dbReference type="EMBL" id="AY056371">
    <property type="protein sequence ID" value="AAL07257.1"/>
    <property type="molecule type" value="mRNA"/>
</dbReference>
<dbReference type="EMBL" id="AY081263">
    <property type="protein sequence ID" value="AAL91152.1"/>
    <property type="molecule type" value="mRNA"/>
</dbReference>
<dbReference type="EMBL" id="BT006262">
    <property type="protein sequence ID" value="AAP13370.1"/>
    <property type="molecule type" value="mRNA"/>
</dbReference>
<dbReference type="EMBL" id="Z27264">
    <property type="protein sequence ID" value="CAA81775.1"/>
    <property type="molecule type" value="mRNA"/>
</dbReference>
<dbReference type="PIR" id="A84674">
    <property type="entry name" value="A84674"/>
</dbReference>
<dbReference type="RefSeq" id="NP_565654.1">
    <property type="nucleotide sequence ID" value="NM_128313.7"/>
</dbReference>
<dbReference type="RefSeq" id="NP_850104.1">
    <property type="nucleotide sequence ID" value="NM_179773.6"/>
</dbReference>
<dbReference type="SMR" id="P59230"/>
<dbReference type="BioGRID" id="2651">
    <property type="interactions" value="126"/>
</dbReference>
<dbReference type="FunCoup" id="P59230">
    <property type="interactions" value="3304"/>
</dbReference>
<dbReference type="STRING" id="3702.P59230"/>
<dbReference type="iPTMnet" id="P59230"/>
<dbReference type="PaxDb" id="3702-AT2G27530.1"/>
<dbReference type="ProteomicsDB" id="236607"/>
<dbReference type="EnsemblPlants" id="AT2G27530.1">
    <property type="protein sequence ID" value="AT2G27530.1"/>
    <property type="gene ID" value="AT2G27530"/>
</dbReference>
<dbReference type="EnsemblPlants" id="AT2G27530.2">
    <property type="protein sequence ID" value="AT2G27530.2"/>
    <property type="gene ID" value="AT2G27530"/>
</dbReference>
<dbReference type="GeneID" id="817299"/>
<dbReference type="Gramene" id="AT2G27530.1">
    <property type="protein sequence ID" value="AT2G27530.1"/>
    <property type="gene ID" value="AT2G27530"/>
</dbReference>
<dbReference type="Gramene" id="AT2G27530.2">
    <property type="protein sequence ID" value="AT2G27530.2"/>
    <property type="gene ID" value="AT2G27530"/>
</dbReference>
<dbReference type="KEGG" id="ath:AT2G27530"/>
<dbReference type="Araport" id="AT2G27530"/>
<dbReference type="TAIR" id="AT2G27530">
    <property type="gene designation" value="PGY1"/>
</dbReference>
<dbReference type="eggNOG" id="KOG1570">
    <property type="taxonomic scope" value="Eukaryota"/>
</dbReference>
<dbReference type="HOGENOM" id="CLU_062853_3_0_1"/>
<dbReference type="InParanoid" id="P59230"/>
<dbReference type="OMA" id="CNFRIAV"/>
<dbReference type="OrthoDB" id="10253007at2759"/>
<dbReference type="PhylomeDB" id="P59230"/>
<dbReference type="CD-CODE" id="4299E36E">
    <property type="entry name" value="Nucleolus"/>
</dbReference>
<dbReference type="PRO" id="PR:P59230"/>
<dbReference type="Proteomes" id="UP000006548">
    <property type="component" value="Chromosome 2"/>
</dbReference>
<dbReference type="ExpressionAtlas" id="P59230">
    <property type="expression patterns" value="baseline and differential"/>
</dbReference>
<dbReference type="GO" id="GO:0022625">
    <property type="term" value="C:cytosolic large ribosomal subunit"/>
    <property type="evidence" value="ECO:0007005"/>
    <property type="project" value="TAIR"/>
</dbReference>
<dbReference type="GO" id="GO:0022626">
    <property type="term" value="C:cytosolic ribosome"/>
    <property type="evidence" value="ECO:0007005"/>
    <property type="project" value="TAIR"/>
</dbReference>
<dbReference type="GO" id="GO:0005777">
    <property type="term" value="C:peroxisome"/>
    <property type="evidence" value="ECO:0007005"/>
    <property type="project" value="TAIR"/>
</dbReference>
<dbReference type="GO" id="GO:0003723">
    <property type="term" value="F:RNA binding"/>
    <property type="evidence" value="ECO:0007669"/>
    <property type="project" value="InterPro"/>
</dbReference>
<dbReference type="GO" id="GO:0003735">
    <property type="term" value="F:structural constituent of ribosome"/>
    <property type="evidence" value="ECO:0000314"/>
    <property type="project" value="CAFA"/>
</dbReference>
<dbReference type="GO" id="GO:0090696">
    <property type="term" value="P:post-embryonic plant organ development"/>
    <property type="evidence" value="ECO:0000316"/>
    <property type="project" value="TAIR"/>
</dbReference>
<dbReference type="GO" id="GO:0006412">
    <property type="term" value="P:translation"/>
    <property type="evidence" value="ECO:0007669"/>
    <property type="project" value="InterPro"/>
</dbReference>
<dbReference type="CDD" id="cd00403">
    <property type="entry name" value="Ribosomal_L1"/>
    <property type="match status" value="1"/>
</dbReference>
<dbReference type="FunFam" id="3.30.190.20:FF:000006">
    <property type="entry name" value="Ribosomal protein"/>
    <property type="match status" value="1"/>
</dbReference>
<dbReference type="FunFam" id="3.40.50.790:FF:000002">
    <property type="entry name" value="Ribosomal protein"/>
    <property type="match status" value="1"/>
</dbReference>
<dbReference type="FunFam" id="3.30.190.20:FF:000009">
    <property type="entry name" value="Ribosomal protein L10a"/>
    <property type="match status" value="1"/>
</dbReference>
<dbReference type="Gene3D" id="3.30.190.20">
    <property type="match status" value="1"/>
</dbReference>
<dbReference type="Gene3D" id="3.40.50.790">
    <property type="match status" value="1"/>
</dbReference>
<dbReference type="InterPro" id="IPR050257">
    <property type="entry name" value="eL8/uL1-like"/>
</dbReference>
<dbReference type="InterPro" id="IPR002143">
    <property type="entry name" value="Ribosomal_uL1"/>
</dbReference>
<dbReference type="InterPro" id="IPR023674">
    <property type="entry name" value="Ribosomal_uL1-like"/>
</dbReference>
<dbReference type="InterPro" id="IPR028364">
    <property type="entry name" value="Ribosomal_uL1/biogenesis"/>
</dbReference>
<dbReference type="InterPro" id="IPR016095">
    <property type="entry name" value="Ribosomal_uL1_3-a/b-sand"/>
</dbReference>
<dbReference type="InterPro" id="IPR023673">
    <property type="entry name" value="Ribosomal_uL1_CS"/>
</dbReference>
<dbReference type="PANTHER" id="PTHR23105">
    <property type="entry name" value="RIBOSOMAL PROTEIN L7AE FAMILY MEMBER"/>
    <property type="match status" value="1"/>
</dbReference>
<dbReference type="Pfam" id="PF00687">
    <property type="entry name" value="Ribosomal_L1"/>
    <property type="match status" value="1"/>
</dbReference>
<dbReference type="PIRSF" id="PIRSF002155">
    <property type="entry name" value="Ribosomal_L1"/>
    <property type="match status" value="1"/>
</dbReference>
<dbReference type="SUPFAM" id="SSF56808">
    <property type="entry name" value="Ribosomal protein L1"/>
    <property type="match status" value="1"/>
</dbReference>
<dbReference type="PROSITE" id="PS01199">
    <property type="entry name" value="RIBOSOMAL_L1"/>
    <property type="match status" value="1"/>
</dbReference>